<name>SUFE2_ARATH</name>
<feature type="chain" id="PRO_0000423487" description="SufE-like protein 2, chloroplastic">
    <location>
        <begin position="1"/>
        <end position="258"/>
    </location>
</feature>
<feature type="region of interest" description="Disordered" evidence="2">
    <location>
        <begin position="1"/>
        <end position="32"/>
    </location>
</feature>
<feature type="compositionally biased region" description="Polar residues" evidence="2">
    <location>
        <begin position="15"/>
        <end position="32"/>
    </location>
</feature>
<feature type="active site" description="Cysteine persulfide intermediate" evidence="1">
    <location>
        <position position="122"/>
    </location>
</feature>
<protein>
    <recommendedName>
        <fullName>SufE-like protein 2, chloroplastic</fullName>
    </recommendedName>
    <alternativeName>
        <fullName>Protein SULFUR E 2</fullName>
    </alternativeName>
</protein>
<comment type="function">
    <text evidence="3">Participates in cysteine desulfurization mediated by NFS2. Can activate the cysteine desulfurase activity of NFS2 in vitro. Cysteine desulfurization mobilizes sulfur from L-cysteine to yield L-alanine and supplies the inorganic sulfur for iron-sulfur (Fe-S) cluster formation.</text>
</comment>
<comment type="pathway">
    <text>Cofactor biosynthesis; iron-sulfur cluster biosynthesis.</text>
</comment>
<comment type="subcellular location">
    <subcellularLocation>
        <location evidence="3">Plastid</location>
        <location evidence="3">Chloroplast</location>
    </subcellularLocation>
</comment>
<comment type="tissue specificity">
    <text evidence="3">Highly expressed in flowers and pollen, and at low levels in roots, leaves and stems.</text>
</comment>
<comment type="similarity">
    <text evidence="4">Belongs to the SufE family.</text>
</comment>
<gene>
    <name type="primary">SUFE2</name>
    <name type="ordered locus">At1g67810</name>
    <name type="ORF">F12A21.6</name>
</gene>
<keyword id="KW-0150">Chloroplast</keyword>
<keyword id="KW-0934">Plastid</keyword>
<keyword id="KW-1185">Reference proteome</keyword>
<sequence>MNTSSSFKALASPPLISTSRPTTKSFPNPRFTSRFSPKPITCMRDSLNLGSNPKAPSPFSLATVSVDAPLGTKTSDKLRILVSEFRSLTEPIDRVKRLLNYAATLAPLDESARISENRVTGCTTQVWLEIKMDEFGRMRFKADSDSEISKGFCSCLIWILDGAKPEEVMGVRSEDLSEMNVGVHGKEQSRVNTWHNVLMSMQKRTMTLVATDVAHQRGQRPPHQHDLLFKYVNGSYMESSKVHDYSISLLPLYYDFII</sequence>
<organism>
    <name type="scientific">Arabidopsis thaliana</name>
    <name type="common">Mouse-ear cress</name>
    <dbReference type="NCBI Taxonomy" id="3702"/>
    <lineage>
        <taxon>Eukaryota</taxon>
        <taxon>Viridiplantae</taxon>
        <taxon>Streptophyta</taxon>
        <taxon>Embryophyta</taxon>
        <taxon>Tracheophyta</taxon>
        <taxon>Spermatophyta</taxon>
        <taxon>Magnoliopsida</taxon>
        <taxon>eudicotyledons</taxon>
        <taxon>Gunneridae</taxon>
        <taxon>Pentapetalae</taxon>
        <taxon>rosids</taxon>
        <taxon>malvids</taxon>
        <taxon>Brassicales</taxon>
        <taxon>Brassicaceae</taxon>
        <taxon>Camelineae</taxon>
        <taxon>Arabidopsis</taxon>
    </lineage>
</organism>
<dbReference type="EMBL" id="AC008113">
    <property type="protein sequence ID" value="AAG28910.1"/>
    <property type="molecule type" value="Genomic_DNA"/>
</dbReference>
<dbReference type="EMBL" id="CP002684">
    <property type="protein sequence ID" value="AEE34701.1"/>
    <property type="molecule type" value="Genomic_DNA"/>
</dbReference>
<dbReference type="EMBL" id="BT029461">
    <property type="protein sequence ID" value="ABK59690.1"/>
    <property type="molecule type" value="mRNA"/>
</dbReference>
<dbReference type="RefSeq" id="NP_176947.1">
    <property type="nucleotide sequence ID" value="NM_105449.4"/>
</dbReference>
<dbReference type="SMR" id="Q9FXE3"/>
<dbReference type="STRING" id="3702.Q9FXE3"/>
<dbReference type="PaxDb" id="3702-AT1G67810.1"/>
<dbReference type="ProteomicsDB" id="228281"/>
<dbReference type="EnsemblPlants" id="AT1G67810.1">
    <property type="protein sequence ID" value="AT1G67810.1"/>
    <property type="gene ID" value="AT1G67810"/>
</dbReference>
<dbReference type="GeneID" id="843107"/>
<dbReference type="Gramene" id="AT1G67810.1">
    <property type="protein sequence ID" value="AT1G67810.1"/>
    <property type="gene ID" value="AT1G67810"/>
</dbReference>
<dbReference type="KEGG" id="ath:AT1G67810"/>
<dbReference type="Araport" id="AT1G67810"/>
<dbReference type="TAIR" id="AT1G67810">
    <property type="gene designation" value="SUFE2"/>
</dbReference>
<dbReference type="eggNOG" id="ENOG502S1HZ">
    <property type="taxonomic scope" value="Eukaryota"/>
</dbReference>
<dbReference type="HOGENOM" id="CLU_077250_0_0_1"/>
<dbReference type="InParanoid" id="Q9FXE3"/>
<dbReference type="OMA" id="VWLEIKM"/>
<dbReference type="PhylomeDB" id="Q9FXE3"/>
<dbReference type="UniPathway" id="UPA00266"/>
<dbReference type="PRO" id="PR:Q9FXE3"/>
<dbReference type="Proteomes" id="UP000006548">
    <property type="component" value="Chromosome 1"/>
</dbReference>
<dbReference type="ExpressionAtlas" id="Q9FXE3">
    <property type="expression patterns" value="baseline and differential"/>
</dbReference>
<dbReference type="GO" id="GO:0009507">
    <property type="term" value="C:chloroplast"/>
    <property type="evidence" value="ECO:0000314"/>
    <property type="project" value="TAIR"/>
</dbReference>
<dbReference type="GO" id="GO:0008047">
    <property type="term" value="F:enzyme activator activity"/>
    <property type="evidence" value="ECO:0000314"/>
    <property type="project" value="TAIR"/>
</dbReference>
<dbReference type="GO" id="GO:0016226">
    <property type="term" value="P:iron-sulfur cluster assembly"/>
    <property type="evidence" value="ECO:0000305"/>
    <property type="project" value="TAIR"/>
</dbReference>
<dbReference type="GO" id="GO:0051176">
    <property type="term" value="P:positive regulation of sulfur metabolic process"/>
    <property type="evidence" value="ECO:0000314"/>
    <property type="project" value="TAIR"/>
</dbReference>
<dbReference type="FunFam" id="3.90.1010.10:FF:000010">
    <property type="entry name" value="Quinolinate synthase, chloroplastic"/>
    <property type="match status" value="1"/>
</dbReference>
<dbReference type="Gene3D" id="3.90.1010.10">
    <property type="match status" value="1"/>
</dbReference>
<dbReference type="InterPro" id="IPR003808">
    <property type="entry name" value="Fe-S_metab-assoc_dom"/>
</dbReference>
<dbReference type="PANTHER" id="PTHR43597:SF5">
    <property type="entry name" value="SUFE-LIKE PROTEIN 2, CHLOROPLASTIC"/>
    <property type="match status" value="1"/>
</dbReference>
<dbReference type="PANTHER" id="PTHR43597">
    <property type="entry name" value="SULFUR ACCEPTOR PROTEIN CSDE"/>
    <property type="match status" value="1"/>
</dbReference>
<dbReference type="Pfam" id="PF02657">
    <property type="entry name" value="SufE"/>
    <property type="match status" value="1"/>
</dbReference>
<dbReference type="SUPFAM" id="SSF82649">
    <property type="entry name" value="SufE/NifU"/>
    <property type="match status" value="1"/>
</dbReference>
<proteinExistence type="evidence at transcript level"/>
<reference key="1">
    <citation type="journal article" date="2000" name="Nature">
        <title>Sequence and analysis of chromosome 1 of the plant Arabidopsis thaliana.</title>
        <authorList>
            <person name="Theologis A."/>
            <person name="Ecker J.R."/>
            <person name="Palm C.J."/>
            <person name="Federspiel N.A."/>
            <person name="Kaul S."/>
            <person name="White O."/>
            <person name="Alonso J."/>
            <person name="Altafi H."/>
            <person name="Araujo R."/>
            <person name="Bowman C.L."/>
            <person name="Brooks S.Y."/>
            <person name="Buehler E."/>
            <person name="Chan A."/>
            <person name="Chao Q."/>
            <person name="Chen H."/>
            <person name="Cheuk R.F."/>
            <person name="Chin C.W."/>
            <person name="Chung M.K."/>
            <person name="Conn L."/>
            <person name="Conway A.B."/>
            <person name="Conway A.R."/>
            <person name="Creasy T.H."/>
            <person name="Dewar K."/>
            <person name="Dunn P."/>
            <person name="Etgu P."/>
            <person name="Feldblyum T.V."/>
            <person name="Feng J.-D."/>
            <person name="Fong B."/>
            <person name="Fujii C.Y."/>
            <person name="Gill J.E."/>
            <person name="Goldsmith A.D."/>
            <person name="Haas B."/>
            <person name="Hansen N.F."/>
            <person name="Hughes B."/>
            <person name="Huizar L."/>
            <person name="Hunter J.L."/>
            <person name="Jenkins J."/>
            <person name="Johnson-Hopson C."/>
            <person name="Khan S."/>
            <person name="Khaykin E."/>
            <person name="Kim C.J."/>
            <person name="Koo H.L."/>
            <person name="Kremenetskaia I."/>
            <person name="Kurtz D.B."/>
            <person name="Kwan A."/>
            <person name="Lam B."/>
            <person name="Langin-Hooper S."/>
            <person name="Lee A."/>
            <person name="Lee J.M."/>
            <person name="Lenz C.A."/>
            <person name="Li J.H."/>
            <person name="Li Y.-P."/>
            <person name="Lin X."/>
            <person name="Liu S.X."/>
            <person name="Liu Z.A."/>
            <person name="Luros J.S."/>
            <person name="Maiti R."/>
            <person name="Marziali A."/>
            <person name="Militscher J."/>
            <person name="Miranda M."/>
            <person name="Nguyen M."/>
            <person name="Nierman W.C."/>
            <person name="Osborne B.I."/>
            <person name="Pai G."/>
            <person name="Peterson J."/>
            <person name="Pham P.K."/>
            <person name="Rizzo M."/>
            <person name="Rooney T."/>
            <person name="Rowley D."/>
            <person name="Sakano H."/>
            <person name="Salzberg S.L."/>
            <person name="Schwartz J.R."/>
            <person name="Shinn P."/>
            <person name="Southwick A.M."/>
            <person name="Sun H."/>
            <person name="Tallon L.J."/>
            <person name="Tambunga G."/>
            <person name="Toriumi M.J."/>
            <person name="Town C.D."/>
            <person name="Utterback T."/>
            <person name="Van Aken S."/>
            <person name="Vaysberg M."/>
            <person name="Vysotskaia V.S."/>
            <person name="Walker M."/>
            <person name="Wu D."/>
            <person name="Yu G."/>
            <person name="Fraser C.M."/>
            <person name="Venter J.C."/>
            <person name="Davis R.W."/>
        </authorList>
    </citation>
    <scope>NUCLEOTIDE SEQUENCE [LARGE SCALE GENOMIC DNA]</scope>
    <source>
        <strain>cv. Columbia</strain>
    </source>
</reference>
<reference key="2">
    <citation type="journal article" date="2017" name="Plant J.">
        <title>Araport11: a complete reannotation of the Arabidopsis thaliana reference genome.</title>
        <authorList>
            <person name="Cheng C.Y."/>
            <person name="Krishnakumar V."/>
            <person name="Chan A.P."/>
            <person name="Thibaud-Nissen F."/>
            <person name="Schobel S."/>
            <person name="Town C.D."/>
        </authorList>
    </citation>
    <scope>GENOME REANNOTATION</scope>
    <source>
        <strain>cv. Columbia</strain>
    </source>
</reference>
<reference key="3">
    <citation type="submission" date="2006-11" db="EMBL/GenBank/DDBJ databases">
        <title>Arabidopsis ORF Clones.</title>
        <authorList>
            <person name="Bautista V.R."/>
            <person name="Kim C.J."/>
            <person name="Chen H."/>
            <person name="Quinitio C."/>
            <person name="Ecker J.R."/>
        </authorList>
    </citation>
    <scope>NUCLEOTIDE SEQUENCE [LARGE SCALE MRNA]</scope>
    <source>
        <strain>cv. Columbia</strain>
    </source>
</reference>
<reference key="4">
    <citation type="journal article" date="2007" name="J. Biol. Chem.">
        <title>Characterization of Arabidopsis thaliana SufE2 and SufE3: functions in chloroplast iron-sulfur cluster assembly and Nad synthesis.</title>
        <authorList>
            <person name="Narayana Murthy U.M."/>
            <person name="Ollagnier-de-Choudens S."/>
            <person name="Sanakis Y."/>
            <person name="Abdel-Ghany S.E."/>
            <person name="Rousset C."/>
            <person name="Ye H."/>
            <person name="Fontecave M."/>
            <person name="Pilon-Smits E.A."/>
            <person name="Pilon M."/>
        </authorList>
    </citation>
    <scope>FUNCTION</scope>
    <scope>SUBCELLULAR LOCATION</scope>
    <scope>TISSUE SPECIFICITY</scope>
</reference>
<accession>Q9FXE3</accession>
<evidence type="ECO:0000250" key="1"/>
<evidence type="ECO:0000256" key="2">
    <source>
        <dbReference type="SAM" id="MobiDB-lite"/>
    </source>
</evidence>
<evidence type="ECO:0000269" key="3">
    <source>
    </source>
</evidence>
<evidence type="ECO:0000305" key="4"/>